<reference key="1">
    <citation type="journal article" date="2006" name="J. Bacteriol.">
        <title>Complete genome sequence of Yersinia pestis strains Antiqua and Nepal516: evidence of gene reduction in an emerging pathogen.</title>
        <authorList>
            <person name="Chain P.S.G."/>
            <person name="Hu P."/>
            <person name="Malfatti S.A."/>
            <person name="Radnedge L."/>
            <person name="Larimer F."/>
            <person name="Vergez L.M."/>
            <person name="Worsham P."/>
            <person name="Chu M.C."/>
            <person name="Andersen G.L."/>
        </authorList>
    </citation>
    <scope>NUCLEOTIDE SEQUENCE [LARGE SCALE GENOMIC DNA]</scope>
    <source>
        <strain>Nepal516</strain>
    </source>
</reference>
<reference key="2">
    <citation type="submission" date="2009-04" db="EMBL/GenBank/DDBJ databases">
        <title>Yersinia pestis Nepal516A whole genome shotgun sequencing project.</title>
        <authorList>
            <person name="Plunkett G. III"/>
            <person name="Anderson B.D."/>
            <person name="Baumler D.J."/>
            <person name="Burland V."/>
            <person name="Cabot E.L."/>
            <person name="Glasner J.D."/>
            <person name="Mau B."/>
            <person name="Neeno-Eckwall E."/>
            <person name="Perna N.T."/>
            <person name="Munk A.C."/>
            <person name="Tapia R."/>
            <person name="Green L.D."/>
            <person name="Rogers Y.C."/>
            <person name="Detter J.C."/>
            <person name="Bruce D.C."/>
            <person name="Brettin T.S."/>
        </authorList>
    </citation>
    <scope>NUCLEOTIDE SEQUENCE [LARGE SCALE GENOMIC DNA]</scope>
    <source>
        <strain>Nepal516</strain>
    </source>
</reference>
<evidence type="ECO:0000255" key="1">
    <source>
        <dbReference type="HAMAP-Rule" id="MF_01585"/>
    </source>
</evidence>
<protein>
    <recommendedName>
        <fullName evidence="1">Lysophospholipid transporter LplT</fullName>
    </recommendedName>
</protein>
<sequence length="406" mass="42841">MSQDVLADKPLLSRSMVAVLCAQFFSAFGDNALLFATLALIKQQLYPDWSQPILQMAFVATYIVLAPFVGQIADGFAKGRVMMVANGLKLAGALVICFGLNPFLGYSLVGVGAAAYSPAKYGILGEITSGEQLVKANGMMEASTIAAILLGSVAGGILADWHLMAALGVCALVYAIAVIANLFIPRLAAARSGASWRPRAMTGSFFTACRLLWQDSETRFSLAGTSLFWGAGVTLRFLLVLWVPVALGIADNATPTLLNAMVAIGIVVGAGAAARFVTLKTVKRCLPAGVLIGVMVTIFSLQNSMPMAYLLLIIIGILGGFFVVPLNALLQERGKHSVGAGNAIAVQNLGENTAMLFMLGLYSLVVKLGAPVVAVGVGFGVVFALAIALLWGWQWRQQRQKTRQPE</sequence>
<name>LPLT_YERPN</name>
<proteinExistence type="inferred from homology"/>
<organism>
    <name type="scientific">Yersinia pestis bv. Antiqua (strain Nepal516)</name>
    <dbReference type="NCBI Taxonomy" id="377628"/>
    <lineage>
        <taxon>Bacteria</taxon>
        <taxon>Pseudomonadati</taxon>
        <taxon>Pseudomonadota</taxon>
        <taxon>Gammaproteobacteria</taxon>
        <taxon>Enterobacterales</taxon>
        <taxon>Yersiniaceae</taxon>
        <taxon>Yersinia</taxon>
    </lineage>
</organism>
<dbReference type="EMBL" id="CP000305">
    <property type="protein sequence ID" value="ABG19322.1"/>
    <property type="molecule type" value="Genomic_DNA"/>
</dbReference>
<dbReference type="EMBL" id="ACNQ01000017">
    <property type="protein sequence ID" value="EEO75474.1"/>
    <property type="molecule type" value="Genomic_DNA"/>
</dbReference>
<dbReference type="RefSeq" id="WP_002209842.1">
    <property type="nucleotide sequence ID" value="NZ_ACNQ01000017.1"/>
</dbReference>
<dbReference type="SMR" id="Q1CFA8"/>
<dbReference type="GeneID" id="96662409"/>
<dbReference type="KEGG" id="ypn:YPN_2995"/>
<dbReference type="HOGENOM" id="CLU_047399_0_0_6"/>
<dbReference type="Proteomes" id="UP000008936">
    <property type="component" value="Chromosome"/>
</dbReference>
<dbReference type="GO" id="GO:0005886">
    <property type="term" value="C:plasma membrane"/>
    <property type="evidence" value="ECO:0007669"/>
    <property type="project" value="UniProtKB-SubCell"/>
</dbReference>
<dbReference type="GO" id="GO:0051978">
    <property type="term" value="F:lysophospholipid:sodium symporter activity"/>
    <property type="evidence" value="ECO:0007669"/>
    <property type="project" value="InterPro"/>
</dbReference>
<dbReference type="CDD" id="cd06173">
    <property type="entry name" value="MFS_MefA_like"/>
    <property type="match status" value="1"/>
</dbReference>
<dbReference type="Gene3D" id="1.20.1250.20">
    <property type="entry name" value="MFS general substrate transporter like domains"/>
    <property type="match status" value="1"/>
</dbReference>
<dbReference type="HAMAP" id="MF_01585">
    <property type="entry name" value="MFS_LplT"/>
    <property type="match status" value="1"/>
</dbReference>
<dbReference type="InterPro" id="IPR023727">
    <property type="entry name" value="LysoPLipid__transptr_LplT"/>
</dbReference>
<dbReference type="InterPro" id="IPR011701">
    <property type="entry name" value="MFS"/>
</dbReference>
<dbReference type="InterPro" id="IPR036259">
    <property type="entry name" value="MFS_trans_sf"/>
</dbReference>
<dbReference type="NCBIfam" id="NF008397">
    <property type="entry name" value="PRK11195.1"/>
    <property type="match status" value="1"/>
</dbReference>
<dbReference type="PANTHER" id="PTHR43266">
    <property type="entry name" value="MACROLIDE-EFFLUX PROTEIN"/>
    <property type="match status" value="1"/>
</dbReference>
<dbReference type="PANTHER" id="PTHR43266:SF2">
    <property type="entry name" value="MAJOR FACILITATOR SUPERFAMILY (MFS) PROFILE DOMAIN-CONTAINING PROTEIN"/>
    <property type="match status" value="1"/>
</dbReference>
<dbReference type="Pfam" id="PF07690">
    <property type="entry name" value="MFS_1"/>
    <property type="match status" value="1"/>
</dbReference>
<dbReference type="SUPFAM" id="SSF103473">
    <property type="entry name" value="MFS general substrate transporter"/>
    <property type="match status" value="1"/>
</dbReference>
<accession>Q1CFA8</accession>
<accession>C4GX24</accession>
<comment type="function">
    <text evidence="1">Catalyzes the facilitated diffusion of 2-acyl-glycero-3-phosphoethanolamine (2-acyl-GPE) into the cell.</text>
</comment>
<comment type="subcellular location">
    <subcellularLocation>
        <location evidence="1">Cell inner membrane</location>
        <topology evidence="1">Multi-pass membrane protein</topology>
    </subcellularLocation>
</comment>
<comment type="similarity">
    <text evidence="1">Belongs to the major facilitator superfamily. LplT (TC 2.A.1.42) family.</text>
</comment>
<feature type="chain" id="PRO_0000309842" description="Lysophospholipid transporter LplT">
    <location>
        <begin position="1"/>
        <end position="406"/>
    </location>
</feature>
<feature type="transmembrane region" description="Helical" evidence="1">
    <location>
        <begin position="16"/>
        <end position="36"/>
    </location>
</feature>
<feature type="transmembrane region" description="Helical" evidence="1">
    <location>
        <begin position="53"/>
        <end position="73"/>
    </location>
</feature>
<feature type="transmembrane region" description="Helical" evidence="1">
    <location>
        <begin position="91"/>
        <end position="111"/>
    </location>
</feature>
<feature type="transmembrane region" description="Helical" evidence="1">
    <location>
        <begin position="139"/>
        <end position="159"/>
    </location>
</feature>
<feature type="transmembrane region" description="Helical" evidence="1">
    <location>
        <begin position="164"/>
        <end position="184"/>
    </location>
</feature>
<feature type="transmembrane region" description="Helical" evidence="1">
    <location>
        <begin position="227"/>
        <end position="247"/>
    </location>
</feature>
<feature type="transmembrane region" description="Helical" evidence="1">
    <location>
        <begin position="253"/>
        <end position="273"/>
    </location>
</feature>
<feature type="transmembrane region" description="Helical" evidence="1">
    <location>
        <begin position="285"/>
        <end position="305"/>
    </location>
</feature>
<feature type="transmembrane region" description="Helical" evidence="1">
    <location>
        <begin position="310"/>
        <end position="330"/>
    </location>
</feature>
<feature type="transmembrane region" description="Helical" evidence="1">
    <location>
        <begin position="349"/>
        <end position="369"/>
    </location>
</feature>
<feature type="transmembrane region" description="Helical" evidence="1">
    <location>
        <begin position="372"/>
        <end position="392"/>
    </location>
</feature>
<keyword id="KW-0997">Cell inner membrane</keyword>
<keyword id="KW-1003">Cell membrane</keyword>
<keyword id="KW-0445">Lipid transport</keyword>
<keyword id="KW-0472">Membrane</keyword>
<keyword id="KW-0812">Transmembrane</keyword>
<keyword id="KW-1133">Transmembrane helix</keyword>
<keyword id="KW-0813">Transport</keyword>
<gene>
    <name evidence="1" type="primary">lplT</name>
    <name type="ordered locus">YPN_2995</name>
    <name type="ORF">YP516_3394</name>
</gene>